<evidence type="ECO:0000255" key="1"/>
<evidence type="ECO:0000305" key="2"/>
<dbReference type="EMBL" id="AE000520">
    <property type="protein sequence ID" value="AAC65141.1"/>
    <property type="molecule type" value="Genomic_DNA"/>
</dbReference>
<dbReference type="PIR" id="F71361">
    <property type="entry name" value="F71361"/>
</dbReference>
<dbReference type="RefSeq" id="WP_010881596.1">
    <property type="nucleotide sequence ID" value="NC_021490.2"/>
</dbReference>
<dbReference type="SMR" id="O83184"/>
<dbReference type="IntAct" id="O83184">
    <property type="interactions" value="2"/>
</dbReference>
<dbReference type="STRING" id="243276.TP_0149"/>
<dbReference type="EnsemblBacteria" id="AAC65141">
    <property type="protein sequence ID" value="AAC65141"/>
    <property type="gene ID" value="TP_0149"/>
</dbReference>
<dbReference type="KEGG" id="tpa:TP_0149"/>
<dbReference type="KEGG" id="tpw:TPANIC_0149"/>
<dbReference type="eggNOG" id="ENOG5032I09">
    <property type="taxonomic scope" value="Bacteria"/>
</dbReference>
<dbReference type="HOGENOM" id="CLU_1377595_0_0_12"/>
<dbReference type="Proteomes" id="UP000000811">
    <property type="component" value="Chromosome"/>
</dbReference>
<dbReference type="GO" id="GO:0005886">
    <property type="term" value="C:plasma membrane"/>
    <property type="evidence" value="ECO:0007669"/>
    <property type="project" value="UniProtKB-SubCell"/>
</dbReference>
<organism>
    <name type="scientific">Treponema pallidum (strain Nichols)</name>
    <dbReference type="NCBI Taxonomy" id="243276"/>
    <lineage>
        <taxon>Bacteria</taxon>
        <taxon>Pseudomonadati</taxon>
        <taxon>Spirochaetota</taxon>
        <taxon>Spirochaetia</taxon>
        <taxon>Spirochaetales</taxon>
        <taxon>Treponemataceae</taxon>
        <taxon>Treponema</taxon>
    </lineage>
</organism>
<gene>
    <name type="ordered locus">TP_0149</name>
</gene>
<comment type="subcellular location">
    <subcellularLocation>
        <location evidence="2">Cell membrane</location>
        <topology evidence="2">Multi-pass membrane protein</topology>
    </subcellularLocation>
</comment>
<proteinExistence type="predicted"/>
<feature type="chain" id="PRO_0000202201" description="Uncharacterized protein TP_0149">
    <location>
        <begin position="1"/>
        <end position="197"/>
    </location>
</feature>
<feature type="transmembrane region" description="Helical" evidence="1">
    <location>
        <begin position="12"/>
        <end position="41"/>
    </location>
</feature>
<feature type="transmembrane region" description="Helical" evidence="1">
    <location>
        <begin position="78"/>
        <end position="100"/>
    </location>
</feature>
<feature type="transmembrane region" description="Helical" evidence="1">
    <location>
        <begin position="120"/>
        <end position="142"/>
    </location>
</feature>
<feature type="transmembrane region" description="Helical" evidence="1">
    <location>
        <begin position="162"/>
        <end position="184"/>
    </location>
</feature>
<protein>
    <recommendedName>
        <fullName>Uncharacterized protein TP_0149</fullName>
    </recommendedName>
</protein>
<reference key="1">
    <citation type="journal article" date="1998" name="Science">
        <title>Complete genome sequence of Treponema pallidum, the syphilis spirochete.</title>
        <authorList>
            <person name="Fraser C.M."/>
            <person name="Norris S.J."/>
            <person name="Weinstock G.M."/>
            <person name="White O."/>
            <person name="Sutton G.G."/>
            <person name="Dodson R.J."/>
            <person name="Gwinn M.L."/>
            <person name="Hickey E.K."/>
            <person name="Clayton R.A."/>
            <person name="Ketchum K.A."/>
            <person name="Sodergren E."/>
            <person name="Hardham J.M."/>
            <person name="McLeod M.P."/>
            <person name="Salzberg S.L."/>
            <person name="Peterson J.D."/>
            <person name="Khalak H.G."/>
            <person name="Richardson D.L."/>
            <person name="Howell J.K."/>
            <person name="Chidambaram M."/>
            <person name="Utterback T.R."/>
            <person name="McDonald L.A."/>
            <person name="Artiach P."/>
            <person name="Bowman C."/>
            <person name="Cotton M.D."/>
            <person name="Fujii C."/>
            <person name="Garland S.A."/>
            <person name="Hatch B."/>
            <person name="Horst K."/>
            <person name="Roberts K.M."/>
            <person name="Sandusky M."/>
            <person name="Weidman J.F."/>
            <person name="Smith H.O."/>
            <person name="Venter J.C."/>
        </authorList>
    </citation>
    <scope>NUCLEOTIDE SEQUENCE [LARGE SCALE GENOMIC DNA]</scope>
    <source>
        <strain>Nichols</strain>
    </source>
</reference>
<keyword id="KW-1003">Cell membrane</keyword>
<keyword id="KW-0472">Membrane</keyword>
<keyword id="KW-1185">Reference proteome</keyword>
<keyword id="KW-0812">Transmembrane</keyword>
<keyword id="KW-1133">Transmembrane helix</keyword>
<accession>O83184</accession>
<name>Y149_TREPA</name>
<sequence>MSKYTVKRASVLCIFGIGLFVPATGTFACGLLLVLGFWVLFFSSLLARFLSQFFMRTRSAPLFEVCLTLSATIMYDNLIQGFFPLVRMMLCPYLFITALSRTLDLCLTAYDADAESLECVGVFGIMIAGISLVRELVAFGCVSLPAPSGFLRIISFPPSNVIRFAATGAGTLISCGIVLWIFRSAGNDHTPSLRSEW</sequence>